<feature type="chain" id="PRO_0000199916" description="Sulfite reductase [NADPH] hemoprotein beta-component">
    <location>
        <begin position="1"/>
        <end position="578"/>
    </location>
</feature>
<feature type="binding site" evidence="1">
    <location>
        <position position="441"/>
    </location>
    <ligand>
        <name>[4Fe-4S] cluster</name>
        <dbReference type="ChEBI" id="CHEBI:49883"/>
    </ligand>
</feature>
<feature type="binding site" evidence="1">
    <location>
        <position position="447"/>
    </location>
    <ligand>
        <name>[4Fe-4S] cluster</name>
        <dbReference type="ChEBI" id="CHEBI:49883"/>
    </ligand>
</feature>
<feature type="binding site" evidence="1">
    <location>
        <position position="487"/>
    </location>
    <ligand>
        <name>[4Fe-4S] cluster</name>
        <dbReference type="ChEBI" id="CHEBI:49883"/>
    </ligand>
</feature>
<feature type="binding site" evidence="1">
    <location>
        <position position="491"/>
    </location>
    <ligand>
        <name>[4Fe-4S] cluster</name>
        <dbReference type="ChEBI" id="CHEBI:49883"/>
    </ligand>
</feature>
<feature type="binding site" description="axial binding residue" evidence="1">
    <location>
        <position position="491"/>
    </location>
    <ligand>
        <name>siroheme</name>
        <dbReference type="ChEBI" id="CHEBI:60052"/>
    </ligand>
    <ligandPart>
        <name>Fe</name>
        <dbReference type="ChEBI" id="CHEBI:18248"/>
    </ligandPart>
</feature>
<gene>
    <name evidence="1" type="primary">cysI</name>
    <name type="ordered locus">VV2966</name>
</gene>
<keyword id="KW-0004">4Fe-4S</keyword>
<keyword id="KW-0028">Amino-acid biosynthesis</keyword>
<keyword id="KW-0198">Cysteine biosynthesis</keyword>
<keyword id="KW-0349">Heme</keyword>
<keyword id="KW-0408">Iron</keyword>
<keyword id="KW-0411">Iron-sulfur</keyword>
<keyword id="KW-0479">Metal-binding</keyword>
<keyword id="KW-0521">NADP</keyword>
<keyword id="KW-0560">Oxidoreductase</keyword>
<evidence type="ECO:0000255" key="1">
    <source>
        <dbReference type="HAMAP-Rule" id="MF_01540"/>
    </source>
</evidence>
<accession>Q7MHA6</accession>
<proteinExistence type="inferred from homology"/>
<protein>
    <recommendedName>
        <fullName evidence="1">Sulfite reductase [NADPH] hemoprotein beta-component</fullName>
        <shortName evidence="1">SiR-HP</shortName>
        <shortName evidence="1">SiRHP</shortName>
        <ecNumber evidence="1">1.8.1.2</ecNumber>
    </recommendedName>
</protein>
<organism>
    <name type="scientific">Vibrio vulnificus (strain YJ016)</name>
    <dbReference type="NCBI Taxonomy" id="196600"/>
    <lineage>
        <taxon>Bacteria</taxon>
        <taxon>Pseudomonadati</taxon>
        <taxon>Pseudomonadota</taxon>
        <taxon>Gammaproteobacteria</taxon>
        <taxon>Vibrionales</taxon>
        <taxon>Vibrionaceae</taxon>
        <taxon>Vibrio</taxon>
    </lineage>
</organism>
<sequence length="578" mass="64959">MTFSIENNKQVVLGEELGKLSDNERLKTQSNFLRGTIEQDLQDRITGGFTADNFQLIRFHGMYQQDDRDIRNERAKQKLEPLHNVMLRARMPGGIITPKQWLAIDKFATEHSLYGSIRLTTRQTFQFHGVLKPNIKLMHQTLNSIGIDSIATAGDVNRNVLCTTNPVESELHQEAYEWAKKISEHLLPKTKAYAEIWLDGEKVETTEDDEPILGKTYLPRKFKTTVVIPPQNDVDVHANDLNFVAIAENGKLIGFNVLVGGGLAMTHGDTSTYPRRADDFGYIPLEKTLDVAAAVVTTQRDWGNRSNRKNAKTKYTLDRVGTDVFKAEVEKRAGIKFEVSRPYEFTERGDRIGWVEGIDGKHHLTLFIENGRLLDYPGKPLKTGVAEIAKIHKGDFRMTANQNLIVAGVSKSNKAKIEKLAREHGLMDEGVSEQRKNSMACVAFPTCPLAMAEAERFLPQFVTDVEGILDKHGLDKEDNIILRVTGCPNGCGRAMLAEIGLVGKAPGRYNLHLGGNRGGTRVPKMYKENITEKQILEEIDQLVGRWANERLPNECFGDFTVRVGIIEEVIISKRDFYA</sequence>
<comment type="function">
    <text evidence="1">Component of the sulfite reductase complex that catalyzes the 6-electron reduction of sulfite to sulfide. This is one of several activities required for the biosynthesis of L-cysteine from sulfate.</text>
</comment>
<comment type="catalytic activity">
    <reaction evidence="1">
        <text>hydrogen sulfide + 3 NADP(+) + 3 H2O = sulfite + 3 NADPH + 4 H(+)</text>
        <dbReference type="Rhea" id="RHEA:13801"/>
        <dbReference type="ChEBI" id="CHEBI:15377"/>
        <dbReference type="ChEBI" id="CHEBI:15378"/>
        <dbReference type="ChEBI" id="CHEBI:17359"/>
        <dbReference type="ChEBI" id="CHEBI:29919"/>
        <dbReference type="ChEBI" id="CHEBI:57783"/>
        <dbReference type="ChEBI" id="CHEBI:58349"/>
        <dbReference type="EC" id="1.8.1.2"/>
    </reaction>
</comment>
<comment type="cofactor">
    <cofactor evidence="1">
        <name>siroheme</name>
        <dbReference type="ChEBI" id="CHEBI:60052"/>
    </cofactor>
    <text evidence="1">Binds 1 siroheme per subunit.</text>
</comment>
<comment type="cofactor">
    <cofactor evidence="1">
        <name>[4Fe-4S] cluster</name>
        <dbReference type="ChEBI" id="CHEBI:49883"/>
    </cofactor>
    <text evidence="1">Binds 1 [4Fe-4S] cluster per subunit.</text>
</comment>
<comment type="pathway">
    <text evidence="1">Sulfur metabolism; hydrogen sulfide biosynthesis; hydrogen sulfide from sulfite (NADPH route): step 1/1.</text>
</comment>
<comment type="subunit">
    <text evidence="1">Alpha(8)-beta(8). The alpha component is a flavoprotein, the beta component is a hemoprotein.</text>
</comment>
<comment type="similarity">
    <text evidence="1">Belongs to the nitrite and sulfite reductase 4Fe-4S domain family.</text>
</comment>
<name>CYSI_VIBVY</name>
<reference key="1">
    <citation type="journal article" date="2003" name="Genome Res.">
        <title>Comparative genome analysis of Vibrio vulnificus, a marine pathogen.</title>
        <authorList>
            <person name="Chen C.-Y."/>
            <person name="Wu K.-M."/>
            <person name="Chang Y.-C."/>
            <person name="Chang C.-H."/>
            <person name="Tsai H.-C."/>
            <person name="Liao T.-L."/>
            <person name="Liu Y.-M."/>
            <person name="Chen H.-J."/>
            <person name="Shen A.B.-T."/>
            <person name="Li J.-C."/>
            <person name="Su T.-L."/>
            <person name="Shao C.-P."/>
            <person name="Lee C.-T."/>
            <person name="Hor L.-I."/>
            <person name="Tsai S.-F."/>
        </authorList>
    </citation>
    <scope>NUCLEOTIDE SEQUENCE [LARGE SCALE GENOMIC DNA]</scope>
    <source>
        <strain>YJ016</strain>
    </source>
</reference>
<dbReference type="EC" id="1.8.1.2" evidence="1"/>
<dbReference type="EMBL" id="BA000037">
    <property type="protein sequence ID" value="BAC95730.1"/>
    <property type="molecule type" value="Genomic_DNA"/>
</dbReference>
<dbReference type="RefSeq" id="WP_011151263.1">
    <property type="nucleotide sequence ID" value="NC_005139.1"/>
</dbReference>
<dbReference type="SMR" id="Q7MHA6"/>
<dbReference type="STRING" id="672.VV93_v1c26960"/>
<dbReference type="KEGG" id="vvy:VV2966"/>
<dbReference type="PATRIC" id="fig|196600.6.peg.2945"/>
<dbReference type="eggNOG" id="COG0155">
    <property type="taxonomic scope" value="Bacteria"/>
</dbReference>
<dbReference type="HOGENOM" id="CLU_001975_3_2_6"/>
<dbReference type="UniPathway" id="UPA00140">
    <property type="reaction ID" value="UER00207"/>
</dbReference>
<dbReference type="Proteomes" id="UP000002675">
    <property type="component" value="Chromosome I"/>
</dbReference>
<dbReference type="GO" id="GO:0009337">
    <property type="term" value="C:sulfite reductase complex (NADPH)"/>
    <property type="evidence" value="ECO:0007669"/>
    <property type="project" value="InterPro"/>
</dbReference>
<dbReference type="GO" id="GO:0051539">
    <property type="term" value="F:4 iron, 4 sulfur cluster binding"/>
    <property type="evidence" value="ECO:0007669"/>
    <property type="project" value="UniProtKB-KW"/>
</dbReference>
<dbReference type="GO" id="GO:0020037">
    <property type="term" value="F:heme binding"/>
    <property type="evidence" value="ECO:0007669"/>
    <property type="project" value="InterPro"/>
</dbReference>
<dbReference type="GO" id="GO:0046872">
    <property type="term" value="F:metal ion binding"/>
    <property type="evidence" value="ECO:0007669"/>
    <property type="project" value="UniProtKB-KW"/>
</dbReference>
<dbReference type="GO" id="GO:0050661">
    <property type="term" value="F:NADP binding"/>
    <property type="evidence" value="ECO:0007669"/>
    <property type="project" value="InterPro"/>
</dbReference>
<dbReference type="GO" id="GO:0050311">
    <property type="term" value="F:sulfite reductase (ferredoxin) activity"/>
    <property type="evidence" value="ECO:0007669"/>
    <property type="project" value="TreeGrafter"/>
</dbReference>
<dbReference type="GO" id="GO:0004783">
    <property type="term" value="F:sulfite reductase (NADPH) activity"/>
    <property type="evidence" value="ECO:0007669"/>
    <property type="project" value="UniProtKB-UniRule"/>
</dbReference>
<dbReference type="GO" id="GO:0019344">
    <property type="term" value="P:cysteine biosynthetic process"/>
    <property type="evidence" value="ECO:0007669"/>
    <property type="project" value="UniProtKB-KW"/>
</dbReference>
<dbReference type="GO" id="GO:0070814">
    <property type="term" value="P:hydrogen sulfide biosynthetic process"/>
    <property type="evidence" value="ECO:0007669"/>
    <property type="project" value="UniProtKB-UniRule"/>
</dbReference>
<dbReference type="GO" id="GO:0000103">
    <property type="term" value="P:sulfate assimilation"/>
    <property type="evidence" value="ECO:0007669"/>
    <property type="project" value="UniProtKB-UniRule"/>
</dbReference>
<dbReference type="FunFam" id="3.30.413.10:FF:000003">
    <property type="entry name" value="Sulfite reductase [NADPH] hemoprotein beta-component"/>
    <property type="match status" value="1"/>
</dbReference>
<dbReference type="FunFam" id="3.30.413.10:FF:000004">
    <property type="entry name" value="Sulfite reductase [NADPH] hemoprotein beta-component"/>
    <property type="match status" value="1"/>
</dbReference>
<dbReference type="Gene3D" id="3.30.413.10">
    <property type="entry name" value="Sulfite Reductase Hemoprotein, domain 1"/>
    <property type="match status" value="2"/>
</dbReference>
<dbReference type="HAMAP" id="MF_01540">
    <property type="entry name" value="CysI"/>
    <property type="match status" value="1"/>
</dbReference>
<dbReference type="InterPro" id="IPR011786">
    <property type="entry name" value="CysI"/>
</dbReference>
<dbReference type="InterPro" id="IPR005117">
    <property type="entry name" value="NiRdtase/SiRdtase_haem-b_fer"/>
</dbReference>
<dbReference type="InterPro" id="IPR036136">
    <property type="entry name" value="Nit/Sulf_reduc_fer-like_dom_sf"/>
</dbReference>
<dbReference type="InterPro" id="IPR006067">
    <property type="entry name" value="NO2/SO3_Rdtase_4Fe4S_dom"/>
</dbReference>
<dbReference type="InterPro" id="IPR045169">
    <property type="entry name" value="NO2/SO3_Rdtase_4Fe4S_prot"/>
</dbReference>
<dbReference type="InterPro" id="IPR045854">
    <property type="entry name" value="NO2/SO3_Rdtase_4Fe4S_sf"/>
</dbReference>
<dbReference type="InterPro" id="IPR006066">
    <property type="entry name" value="NO2/SO3_Rdtase_FeS/sirohaem_BS"/>
</dbReference>
<dbReference type="NCBIfam" id="TIGR02041">
    <property type="entry name" value="CysI"/>
    <property type="match status" value="1"/>
</dbReference>
<dbReference type="NCBIfam" id="NF010029">
    <property type="entry name" value="PRK13504.1"/>
    <property type="match status" value="1"/>
</dbReference>
<dbReference type="PANTHER" id="PTHR11493:SF47">
    <property type="entry name" value="SULFITE REDUCTASE [NADPH] SUBUNIT BETA"/>
    <property type="match status" value="1"/>
</dbReference>
<dbReference type="PANTHER" id="PTHR11493">
    <property type="entry name" value="SULFITE REDUCTASE [NADPH] SUBUNIT BETA-RELATED"/>
    <property type="match status" value="1"/>
</dbReference>
<dbReference type="Pfam" id="PF01077">
    <property type="entry name" value="NIR_SIR"/>
    <property type="match status" value="1"/>
</dbReference>
<dbReference type="Pfam" id="PF03460">
    <property type="entry name" value="NIR_SIR_ferr"/>
    <property type="match status" value="2"/>
</dbReference>
<dbReference type="PRINTS" id="PR00397">
    <property type="entry name" value="SIROHAEM"/>
</dbReference>
<dbReference type="SUPFAM" id="SSF56014">
    <property type="entry name" value="Nitrite and sulphite reductase 4Fe-4S domain-like"/>
    <property type="match status" value="2"/>
</dbReference>
<dbReference type="SUPFAM" id="SSF55124">
    <property type="entry name" value="Nitrite/Sulfite reductase N-terminal domain-like"/>
    <property type="match status" value="2"/>
</dbReference>
<dbReference type="PROSITE" id="PS00365">
    <property type="entry name" value="NIR_SIR"/>
    <property type="match status" value="1"/>
</dbReference>